<comment type="function">
    <text evidence="1">Part of the ABC transporter complex PotABCD involved in spermidine/putrescine import. Responsible for energy coupling to the transport system.</text>
</comment>
<comment type="catalytic activity">
    <reaction evidence="1">
        <text>ATP + H2O + polyamine-[polyamine-binding protein]Side 1 = ADP + phosphate + polyamineSide 2 + [polyamine-binding protein]Side 1.</text>
        <dbReference type="EC" id="7.6.2.11"/>
    </reaction>
</comment>
<comment type="subunit">
    <text evidence="1">The complex is composed of two ATP-binding proteins (PotA), two transmembrane proteins (PotB and PotC) and a solute-binding protein (PotD).</text>
</comment>
<comment type="subcellular location">
    <subcellularLocation>
        <location evidence="1">Cell membrane</location>
        <topology evidence="1">Peripheral membrane protein</topology>
    </subcellularLocation>
</comment>
<comment type="similarity">
    <text evidence="1">Belongs to the ABC transporter superfamily. Spermidine/putrescine importer (TC 3.A.1.11.1) family.</text>
</comment>
<comment type="sequence caution" evidence="2">
    <conflict type="erroneous initiation">
        <sequence resource="EMBL-CDS" id="CAC96029"/>
    </conflict>
</comment>
<name>POTA_LISIN</name>
<reference key="1">
    <citation type="journal article" date="2001" name="Science">
        <title>Comparative genomics of Listeria species.</title>
        <authorList>
            <person name="Glaser P."/>
            <person name="Frangeul L."/>
            <person name="Buchrieser C."/>
            <person name="Rusniok C."/>
            <person name="Amend A."/>
            <person name="Baquero F."/>
            <person name="Berche P."/>
            <person name="Bloecker H."/>
            <person name="Brandt P."/>
            <person name="Chakraborty T."/>
            <person name="Charbit A."/>
            <person name="Chetouani F."/>
            <person name="Couve E."/>
            <person name="de Daruvar A."/>
            <person name="Dehoux P."/>
            <person name="Domann E."/>
            <person name="Dominguez-Bernal G."/>
            <person name="Duchaud E."/>
            <person name="Durant L."/>
            <person name="Dussurget O."/>
            <person name="Entian K.-D."/>
            <person name="Fsihi H."/>
            <person name="Garcia-del Portillo F."/>
            <person name="Garrido P."/>
            <person name="Gautier L."/>
            <person name="Goebel W."/>
            <person name="Gomez-Lopez N."/>
            <person name="Hain T."/>
            <person name="Hauf J."/>
            <person name="Jackson D."/>
            <person name="Jones L.-M."/>
            <person name="Kaerst U."/>
            <person name="Kreft J."/>
            <person name="Kuhn M."/>
            <person name="Kunst F."/>
            <person name="Kurapkat G."/>
            <person name="Madueno E."/>
            <person name="Maitournam A."/>
            <person name="Mata Vicente J."/>
            <person name="Ng E."/>
            <person name="Nedjari H."/>
            <person name="Nordsiek G."/>
            <person name="Novella S."/>
            <person name="de Pablos B."/>
            <person name="Perez-Diaz J.-C."/>
            <person name="Purcell R."/>
            <person name="Remmel B."/>
            <person name="Rose M."/>
            <person name="Schlueter T."/>
            <person name="Simoes N."/>
            <person name="Tierrez A."/>
            <person name="Vazquez-Boland J.-A."/>
            <person name="Voss H."/>
            <person name="Wehland J."/>
            <person name="Cossart P."/>
        </authorList>
    </citation>
    <scope>NUCLEOTIDE SEQUENCE [LARGE SCALE GENOMIC DNA]</scope>
    <source>
        <strain>ATCC BAA-680 / CLIP 11262</strain>
    </source>
</reference>
<protein>
    <recommendedName>
        <fullName evidence="1">Spermidine/putrescine import ATP-binding protein PotA</fullName>
        <ecNumber evidence="1">7.6.2.11</ecNumber>
    </recommendedName>
</protein>
<proteinExistence type="inferred from homology"/>
<gene>
    <name evidence="1" type="primary">potA</name>
    <name type="ordered locus">lin0797</name>
</gene>
<feature type="chain" id="PRO_0000286243" description="Spermidine/putrescine import ATP-binding protein PotA">
    <location>
        <begin position="1"/>
        <end position="366"/>
    </location>
</feature>
<feature type="domain" description="ABC transporter" evidence="1">
    <location>
        <begin position="8"/>
        <end position="239"/>
    </location>
</feature>
<feature type="binding site" evidence="1">
    <location>
        <begin position="41"/>
        <end position="48"/>
    </location>
    <ligand>
        <name>ATP</name>
        <dbReference type="ChEBI" id="CHEBI:30616"/>
    </ligand>
</feature>
<sequence length="366" mass="41939">MIVTETIIRFENVTKQFDNDPPVLDNVSFEIEKGKFYTLLGPSGCGKTTILRLIAGFLEASEGQIYLGDKVINQIPANKRPVNTVFQDYALFPHLNVYENVAFGLRIKKLKKDAIDKKVQEALRFVNLKGYEKREISEMSGGQRQRVAIARAIVNEPEVILLDEPLSALDLKLRTEMQYELRDLQKRLGITFIFVTHDQEEALAMSDEIFVLNKGEIQQSGTPIDIYDEPINKFVADFIGESNIVNGKMIQDFEVEFVERRFECVDQGFRPNEVVEVVIRPEDLEITSAEKGKLQVTVDWMLFRGVHYEVGCIDIDGNEWLVHTTRKVRVGDKIGLAFEPEAIHVMRLGETEEEFDKRLDSYDEVQ</sequence>
<keyword id="KW-0067">ATP-binding</keyword>
<keyword id="KW-1003">Cell membrane</keyword>
<keyword id="KW-0472">Membrane</keyword>
<keyword id="KW-0547">Nucleotide-binding</keyword>
<keyword id="KW-1278">Translocase</keyword>
<keyword id="KW-0813">Transport</keyword>
<organism>
    <name type="scientific">Listeria innocua serovar 6a (strain ATCC BAA-680 / CLIP 11262)</name>
    <dbReference type="NCBI Taxonomy" id="272626"/>
    <lineage>
        <taxon>Bacteria</taxon>
        <taxon>Bacillati</taxon>
        <taxon>Bacillota</taxon>
        <taxon>Bacilli</taxon>
        <taxon>Bacillales</taxon>
        <taxon>Listeriaceae</taxon>
        <taxon>Listeria</taxon>
    </lineage>
</organism>
<evidence type="ECO:0000255" key="1">
    <source>
        <dbReference type="HAMAP-Rule" id="MF_01726"/>
    </source>
</evidence>
<evidence type="ECO:0000305" key="2"/>
<dbReference type="EC" id="7.6.2.11" evidence="1"/>
<dbReference type="EMBL" id="AL596166">
    <property type="protein sequence ID" value="CAC96029.1"/>
    <property type="status" value="ALT_INIT"/>
    <property type="molecule type" value="Genomic_DNA"/>
</dbReference>
<dbReference type="PIR" id="AE1532">
    <property type="entry name" value="AE1532"/>
</dbReference>
<dbReference type="SMR" id="Q92DL6"/>
<dbReference type="STRING" id="272626.gene:17565124"/>
<dbReference type="KEGG" id="lin:lin0797"/>
<dbReference type="eggNOG" id="COG3842">
    <property type="taxonomic scope" value="Bacteria"/>
</dbReference>
<dbReference type="HOGENOM" id="CLU_000604_1_1_9"/>
<dbReference type="Proteomes" id="UP000002513">
    <property type="component" value="Chromosome"/>
</dbReference>
<dbReference type="GO" id="GO:0043190">
    <property type="term" value="C:ATP-binding cassette (ABC) transporter complex"/>
    <property type="evidence" value="ECO:0007669"/>
    <property type="project" value="InterPro"/>
</dbReference>
<dbReference type="GO" id="GO:0015594">
    <property type="term" value="F:ABC-type putrescine transporter activity"/>
    <property type="evidence" value="ECO:0007669"/>
    <property type="project" value="InterPro"/>
</dbReference>
<dbReference type="GO" id="GO:0005524">
    <property type="term" value="F:ATP binding"/>
    <property type="evidence" value="ECO:0007669"/>
    <property type="project" value="UniProtKB-KW"/>
</dbReference>
<dbReference type="GO" id="GO:0016887">
    <property type="term" value="F:ATP hydrolysis activity"/>
    <property type="evidence" value="ECO:0007669"/>
    <property type="project" value="InterPro"/>
</dbReference>
<dbReference type="CDD" id="cd03300">
    <property type="entry name" value="ABC_PotA_N"/>
    <property type="match status" value="1"/>
</dbReference>
<dbReference type="FunFam" id="3.40.50.300:FF:000042">
    <property type="entry name" value="Maltose/maltodextrin ABC transporter, ATP-binding protein"/>
    <property type="match status" value="1"/>
</dbReference>
<dbReference type="Gene3D" id="2.40.50.100">
    <property type="match status" value="1"/>
</dbReference>
<dbReference type="Gene3D" id="2.40.50.140">
    <property type="entry name" value="Nucleic acid-binding proteins"/>
    <property type="match status" value="1"/>
</dbReference>
<dbReference type="Gene3D" id="3.40.50.300">
    <property type="entry name" value="P-loop containing nucleotide triphosphate hydrolases"/>
    <property type="match status" value="1"/>
</dbReference>
<dbReference type="InterPro" id="IPR003593">
    <property type="entry name" value="AAA+_ATPase"/>
</dbReference>
<dbReference type="InterPro" id="IPR050093">
    <property type="entry name" value="ABC_SmlMolc_Importer"/>
</dbReference>
<dbReference type="InterPro" id="IPR003439">
    <property type="entry name" value="ABC_transporter-like_ATP-bd"/>
</dbReference>
<dbReference type="InterPro" id="IPR017871">
    <property type="entry name" value="ABC_transporter-like_CS"/>
</dbReference>
<dbReference type="InterPro" id="IPR008995">
    <property type="entry name" value="Mo/tungstate-bd_C_term_dom"/>
</dbReference>
<dbReference type="InterPro" id="IPR012340">
    <property type="entry name" value="NA-bd_OB-fold"/>
</dbReference>
<dbReference type="InterPro" id="IPR027417">
    <property type="entry name" value="P-loop_NTPase"/>
</dbReference>
<dbReference type="InterPro" id="IPR017879">
    <property type="entry name" value="PotA_ATP-bd"/>
</dbReference>
<dbReference type="InterPro" id="IPR013611">
    <property type="entry name" value="Transp-assoc_OB_typ2"/>
</dbReference>
<dbReference type="PANTHER" id="PTHR42781">
    <property type="entry name" value="SPERMIDINE/PUTRESCINE IMPORT ATP-BINDING PROTEIN POTA"/>
    <property type="match status" value="1"/>
</dbReference>
<dbReference type="PANTHER" id="PTHR42781:SF4">
    <property type="entry name" value="SPERMIDINE_PUTRESCINE IMPORT ATP-BINDING PROTEIN POTA"/>
    <property type="match status" value="1"/>
</dbReference>
<dbReference type="Pfam" id="PF00005">
    <property type="entry name" value="ABC_tran"/>
    <property type="match status" value="1"/>
</dbReference>
<dbReference type="Pfam" id="PF08402">
    <property type="entry name" value="TOBE_2"/>
    <property type="match status" value="1"/>
</dbReference>
<dbReference type="SMART" id="SM00382">
    <property type="entry name" value="AAA"/>
    <property type="match status" value="1"/>
</dbReference>
<dbReference type="SUPFAM" id="SSF50331">
    <property type="entry name" value="MOP-like"/>
    <property type="match status" value="1"/>
</dbReference>
<dbReference type="SUPFAM" id="SSF52540">
    <property type="entry name" value="P-loop containing nucleoside triphosphate hydrolases"/>
    <property type="match status" value="1"/>
</dbReference>
<dbReference type="PROSITE" id="PS00211">
    <property type="entry name" value="ABC_TRANSPORTER_1"/>
    <property type="match status" value="1"/>
</dbReference>
<dbReference type="PROSITE" id="PS50893">
    <property type="entry name" value="ABC_TRANSPORTER_2"/>
    <property type="match status" value="1"/>
</dbReference>
<dbReference type="PROSITE" id="PS51305">
    <property type="entry name" value="POTA"/>
    <property type="match status" value="1"/>
</dbReference>
<accession>Q92DL6</accession>